<reference key="1">
    <citation type="submission" date="2006-12" db="EMBL/GenBank/DDBJ databases">
        <title>Complete sequence of Chlorobium phaeobacteroides DSM 266.</title>
        <authorList>
            <consortium name="US DOE Joint Genome Institute"/>
            <person name="Copeland A."/>
            <person name="Lucas S."/>
            <person name="Lapidus A."/>
            <person name="Barry K."/>
            <person name="Detter J.C."/>
            <person name="Glavina del Rio T."/>
            <person name="Hammon N."/>
            <person name="Israni S."/>
            <person name="Pitluck S."/>
            <person name="Goltsman E."/>
            <person name="Schmutz J."/>
            <person name="Larimer F."/>
            <person name="Land M."/>
            <person name="Hauser L."/>
            <person name="Mikhailova N."/>
            <person name="Li T."/>
            <person name="Overmann J."/>
            <person name="Bryant D.A."/>
            <person name="Richardson P."/>
        </authorList>
    </citation>
    <scope>NUCLEOTIDE SEQUENCE [LARGE SCALE GENOMIC DNA]</scope>
    <source>
        <strain>DSM 266 / SMG 266 / 2430</strain>
    </source>
</reference>
<accession>A1BI20</accession>
<evidence type="ECO:0000255" key="1">
    <source>
        <dbReference type="HAMAP-Rule" id="MF_01867"/>
    </source>
</evidence>
<sequence>MNTFLLDYRQIRTPKKGFSGIFRDYVSDGHERSQLLTECFHLDAEKEGDYYKQLSLLGSRTYSRATLVDLLKRQNQRYGCSELHLKEIEKLRSPRCMVVVTGQQPGLFLGPLYTMYKALSAIVFAERQKALFPEYDFVPVFWMEIEDHDYEESAHTALFSGGKVAHFRPEPYKRLPDQMIGGSSFGEEMRNTVAEFIDTLQDSPHKEAISGLLNAAYAPGSTFETGFAQTMMHLFRDQPLILLSSQDREFKKLSRNIFARELATCPTASYNVIAQSSKLEKLGYTTQSKPRAVNLFYINTDNQRQKIELHEEDTFQIHPDKQRYSRHQILELCEDHPERFSPNVVLRPIVQDTILPVFACIAGPGEISYLAQYRKNYEHFGITMPFIIPRGSFTLIEPKFSRIMDKLLRITGKPGFSRKQIYHAVFNDLQTLKKNAEGIAEHPDIERLFNETKTEMERLLESLEPVLAKIDPTLAPVLAASSVQTLKIIESLEQKTRKAGRKKNEELLEQIQKSETAFFPEGVPQERMINSFYFINKYGPSLIGTLKNLLSGHSTEEHIIVEL</sequence>
<protein>
    <recommendedName>
        <fullName evidence="1">Putative cysteine ligase BshC</fullName>
        <ecNumber evidence="1">6.-.-.-</ecNumber>
    </recommendedName>
</protein>
<feature type="chain" id="PRO_0000378229" description="Putative cysteine ligase BshC">
    <location>
        <begin position="1"/>
        <end position="563"/>
    </location>
</feature>
<feature type="coiled-coil region" evidence="1">
    <location>
        <begin position="444"/>
        <end position="464"/>
    </location>
</feature>
<feature type="coiled-coil region" evidence="1">
    <location>
        <begin position="493"/>
        <end position="517"/>
    </location>
</feature>
<keyword id="KW-0175">Coiled coil</keyword>
<keyword id="KW-0436">Ligase</keyword>
<keyword id="KW-1185">Reference proteome</keyword>
<name>BSHC_CHLPD</name>
<gene>
    <name evidence="1" type="primary">bshC</name>
    <name type="ordered locus">Cpha266_2035</name>
</gene>
<organism>
    <name type="scientific">Chlorobium phaeobacteroides (strain DSM 266 / SMG 266 / 2430)</name>
    <dbReference type="NCBI Taxonomy" id="290317"/>
    <lineage>
        <taxon>Bacteria</taxon>
        <taxon>Pseudomonadati</taxon>
        <taxon>Chlorobiota</taxon>
        <taxon>Chlorobiia</taxon>
        <taxon>Chlorobiales</taxon>
        <taxon>Chlorobiaceae</taxon>
        <taxon>Chlorobium/Pelodictyon group</taxon>
        <taxon>Chlorobium</taxon>
    </lineage>
</organism>
<comment type="similarity">
    <text evidence="1">Belongs to the BshC family.</text>
</comment>
<proteinExistence type="inferred from homology"/>
<dbReference type="EC" id="6.-.-.-" evidence="1"/>
<dbReference type="EMBL" id="CP000492">
    <property type="protein sequence ID" value="ABL66047.1"/>
    <property type="molecule type" value="Genomic_DNA"/>
</dbReference>
<dbReference type="RefSeq" id="WP_011745851.1">
    <property type="nucleotide sequence ID" value="NC_008639.1"/>
</dbReference>
<dbReference type="SMR" id="A1BI20"/>
<dbReference type="STRING" id="290317.Cpha266_2035"/>
<dbReference type="KEGG" id="cph:Cpha266_2035"/>
<dbReference type="eggNOG" id="COG4365">
    <property type="taxonomic scope" value="Bacteria"/>
</dbReference>
<dbReference type="HOGENOM" id="CLU_022249_1_0_10"/>
<dbReference type="OrthoDB" id="9765151at2"/>
<dbReference type="Proteomes" id="UP000008701">
    <property type="component" value="Chromosome"/>
</dbReference>
<dbReference type="GO" id="GO:0016874">
    <property type="term" value="F:ligase activity"/>
    <property type="evidence" value="ECO:0007669"/>
    <property type="project" value="UniProtKB-UniRule"/>
</dbReference>
<dbReference type="HAMAP" id="MF_01867">
    <property type="entry name" value="BshC"/>
    <property type="match status" value="1"/>
</dbReference>
<dbReference type="InterPro" id="IPR011199">
    <property type="entry name" value="Bacillithiol_biosynth_BshC"/>
</dbReference>
<dbReference type="InterPro" id="IPR055399">
    <property type="entry name" value="CC_BshC"/>
</dbReference>
<dbReference type="InterPro" id="IPR055398">
    <property type="entry name" value="Rossmann-like_BshC"/>
</dbReference>
<dbReference type="NCBIfam" id="TIGR03998">
    <property type="entry name" value="thiol_BshC"/>
    <property type="match status" value="1"/>
</dbReference>
<dbReference type="Pfam" id="PF24850">
    <property type="entry name" value="CC_BshC"/>
    <property type="match status" value="1"/>
</dbReference>
<dbReference type="Pfam" id="PF10079">
    <property type="entry name" value="Rossmann-like_BshC"/>
    <property type="match status" value="1"/>
</dbReference>
<dbReference type="PIRSF" id="PIRSF012535">
    <property type="entry name" value="UCP012535"/>
    <property type="match status" value="1"/>
</dbReference>